<proteinExistence type="evidence at protein level"/>
<gene>
    <name type="primary">ald1</name>
</gene>
<sequence>MHYVDPNQSGSKIHFKDQYENFIGGQWVAPVKGVYFDNISPVDGKSFTRIPRSSAEDIELALDAAHKAKKEWNKSSPTTRSNLLLKIADRMEANLEMLAVAETWDNGKPVRETLAADIPLAIDHFRYFAGCIRAQEGGISEIDEDTIAYHFHEPLGVVGQIIPWNFPILMAAWKLAPALAAGNCVVIKPAEQTPVGILLVAELIQDLLPAGVLNIVNGYGAEVGRPLATSPRIAKIAFTGSTQVGQLIMQYATENIIPVTLELGGKSPNVFFADVMDHDDDFLDKTLEGFAMFALNQGEVCTCPSRALIQESIADQFMEKAIERVKRIKLGHPLDTDTMVGAQASLEQQEKILRCIDTGRQEGAEVLLGGHGRQEVGNGYYIEPTIFKGHNNMQVFQEEIFGPVLSVTTFKDFDEAIQIANDTMYGLGAGVWSRSTHTAYRAGRAIEAGRVWTNCYHIYPAHAAFGGYKKSGVGRENHKMMLDHYQQTKNLLVSYSTKAMGFF</sequence>
<keyword id="KW-0903">Direct protein sequencing</keyword>
<keyword id="KW-0520">NAD</keyword>
<keyword id="KW-0560">Oxidoreductase</keyword>
<evidence type="ECO:0000250" key="1"/>
<evidence type="ECO:0000269" key="2">
    <source>
    </source>
</evidence>
<evidence type="ECO:0000305" key="3"/>
<protein>
    <recommendedName>
        <fullName>Long-chain-aldehyde dehydrogenase</fullName>
        <ecNumber>1.2.1.48</ecNumber>
    </recommendedName>
    <alternativeName>
        <fullName>Aldehyde dehydrogenase 1</fullName>
    </alternativeName>
</protein>
<dbReference type="EC" id="1.2.1.48"/>
<dbReference type="EMBL" id="AB042203">
    <property type="protein sequence ID" value="BAB11888.1"/>
    <property type="molecule type" value="Genomic_DNA"/>
</dbReference>
<dbReference type="SMR" id="Q9FDS1"/>
<dbReference type="GO" id="GO:0050061">
    <property type="term" value="F:long-chain fatty aldehyde dehydrogenase (NAD+) activity"/>
    <property type="evidence" value="ECO:0000314"/>
    <property type="project" value="UniProtKB"/>
</dbReference>
<dbReference type="GO" id="GO:0051289">
    <property type="term" value="P:protein homotetramerization"/>
    <property type="evidence" value="ECO:0000314"/>
    <property type="project" value="UniProtKB"/>
</dbReference>
<dbReference type="CDD" id="cd07116">
    <property type="entry name" value="ALDH_ACDHII-AcoD"/>
    <property type="match status" value="1"/>
</dbReference>
<dbReference type="FunFam" id="3.40.605.10:FF:000001">
    <property type="entry name" value="Aldehyde dehydrogenase 1"/>
    <property type="match status" value="1"/>
</dbReference>
<dbReference type="FunFam" id="3.40.309.10:FF:000012">
    <property type="entry name" value="Betaine aldehyde dehydrogenase"/>
    <property type="match status" value="1"/>
</dbReference>
<dbReference type="Gene3D" id="3.40.605.10">
    <property type="entry name" value="Aldehyde Dehydrogenase, Chain A, domain 1"/>
    <property type="match status" value="1"/>
</dbReference>
<dbReference type="Gene3D" id="3.40.309.10">
    <property type="entry name" value="Aldehyde Dehydrogenase, Chain A, domain 2"/>
    <property type="match status" value="1"/>
</dbReference>
<dbReference type="InterPro" id="IPR016161">
    <property type="entry name" value="Ald_DH/histidinol_DH"/>
</dbReference>
<dbReference type="InterPro" id="IPR016163">
    <property type="entry name" value="Ald_DH_C"/>
</dbReference>
<dbReference type="InterPro" id="IPR016160">
    <property type="entry name" value="Ald_DH_CS_CYS"/>
</dbReference>
<dbReference type="InterPro" id="IPR029510">
    <property type="entry name" value="Ald_DH_CS_GLU"/>
</dbReference>
<dbReference type="InterPro" id="IPR016162">
    <property type="entry name" value="Ald_DH_N"/>
</dbReference>
<dbReference type="InterPro" id="IPR015590">
    <property type="entry name" value="Aldehyde_DH_dom"/>
</dbReference>
<dbReference type="PANTHER" id="PTHR43111">
    <property type="entry name" value="ALDEHYDE DEHYDROGENASE B-RELATED"/>
    <property type="match status" value="1"/>
</dbReference>
<dbReference type="PANTHER" id="PTHR43111:SF1">
    <property type="entry name" value="ALDEHYDE DEHYDROGENASE B-RELATED"/>
    <property type="match status" value="1"/>
</dbReference>
<dbReference type="Pfam" id="PF00171">
    <property type="entry name" value="Aldedh"/>
    <property type="match status" value="1"/>
</dbReference>
<dbReference type="SUPFAM" id="SSF53720">
    <property type="entry name" value="ALDH-like"/>
    <property type="match status" value="1"/>
</dbReference>
<dbReference type="PROSITE" id="PS00070">
    <property type="entry name" value="ALDEHYDE_DEHYDR_CYS"/>
    <property type="match status" value="1"/>
</dbReference>
<dbReference type="PROSITE" id="PS00687">
    <property type="entry name" value="ALDEHYDE_DEHYDR_GLU"/>
    <property type="match status" value="1"/>
</dbReference>
<accession>Q9FDS1</accession>
<organism>
    <name type="scientific">Acinetobacter sp</name>
    <dbReference type="NCBI Taxonomy" id="472"/>
    <lineage>
        <taxon>Bacteria</taxon>
        <taxon>Pseudomonadati</taxon>
        <taxon>Pseudomonadota</taxon>
        <taxon>Gammaproteobacteria</taxon>
        <taxon>Moraxellales</taxon>
        <taxon>Moraxellaceae</taxon>
        <taxon>Acinetobacter</taxon>
    </lineage>
</organism>
<reference key="1">
    <citation type="journal article" date="2000" name="Appl. Environ. Microbiol.">
        <title>Long-chain aldehyde dehydrogenase that participates in n-alkane utilization and wax ester synthesis in Acinetobacter sp. strain M-1.</title>
        <authorList>
            <person name="Ishige T."/>
            <person name="Tani A."/>
            <person name="Sakai Y."/>
            <person name="Kato N."/>
        </authorList>
    </citation>
    <scope>NUCLEOTIDE SEQUENCE [GENOMIC DNA]</scope>
    <scope>PROTEIN SEQUENCE OF 1-32 AND 480-489</scope>
    <scope>FUNCTION</scope>
    <scope>CATALYTIC ACTIVITY</scope>
    <scope>SUBUNIT</scope>
    <scope>BIOPHYSICOCHEMICAL PROPERTIES</scope>
    <scope>ACTIVITY REGULATION</scope>
    <scope>DISRUPTION PHENOTYPE</scope>
    <source>
        <strain>M-1</strain>
    </source>
</reference>
<feature type="chain" id="PRO_0000430454" description="Long-chain-aldehyde dehydrogenase">
    <location>
        <begin position="1"/>
        <end position="503"/>
    </location>
</feature>
<feature type="active site" evidence="1">
    <location>
        <position position="262"/>
    </location>
</feature>
<feature type="active site" evidence="1">
    <location>
        <position position="301"/>
    </location>
</feature>
<feature type="binding site" evidence="1">
    <location>
        <begin position="218"/>
        <end position="224"/>
    </location>
    <ligand>
        <name>NAD(+)</name>
        <dbReference type="ChEBI" id="CHEBI:57540"/>
    </ligand>
</feature>
<name>ALD1_ACISP</name>
<comment type="function">
    <text evidence="2">Aldehyde dehydrogenase that shows activity toward n-alkanals (C(4) to C(14)), with a preference for longer carbon chains. The best substrate is tetradecanal.</text>
</comment>
<comment type="catalytic activity">
    <reaction evidence="2">
        <text>a long-chain fatty aldehyde + NAD(+) + H2O = a long-chain fatty acid + NADH + 2 H(+)</text>
        <dbReference type="Rhea" id="RHEA:10652"/>
        <dbReference type="ChEBI" id="CHEBI:15377"/>
        <dbReference type="ChEBI" id="CHEBI:15378"/>
        <dbReference type="ChEBI" id="CHEBI:17176"/>
        <dbReference type="ChEBI" id="CHEBI:57540"/>
        <dbReference type="ChEBI" id="CHEBI:57560"/>
        <dbReference type="ChEBI" id="CHEBI:57945"/>
        <dbReference type="EC" id="1.2.1.48"/>
    </reaction>
</comment>
<comment type="activity regulation">
    <text evidence="2">Completely inhibited by p-chloromercuribenzoate and N-ethylmaleimide. Strongly inhibited by iodoacetate. Inhibited by Pb(2+), Fe(3+), Ag(+) and Hg(2+) and partially inhibited by several other metal ions Mn(2+), Zn(2+) and Cu(2+).</text>
</comment>
<comment type="biophysicochemical properties">
    <phDependence>
        <text evidence="2">Optimum pH is 9.5.</text>
    </phDependence>
    <temperatureDependence>
        <text evidence="2">Optimum temperature is 43 degrees Celsius.</text>
    </temperatureDependence>
</comment>
<comment type="subunit">
    <text evidence="2">Homotetramer.</text>
</comment>
<comment type="disruption phenotype">
    <text evidence="2">Reduced aldehyde dehydrogenase activity toward n-tetradecanal, although cells are still able to grow on n-hexadecane to some extent.</text>
</comment>
<comment type="similarity">
    <text evidence="3">Belongs to the aldehyde dehydrogenase family.</text>
</comment>